<gene>
    <name evidence="1" type="primary">cshB</name>
    <name type="ordered locus">lmo1450</name>
</gene>
<name>CSHB_LISMO</name>
<comment type="function">
    <text evidence="3 4">DEAD-box RNA helicase involved in cold tolerance, motility, and tolerance to heat, alkali and oxidative stress.</text>
</comment>
<comment type="catalytic activity">
    <reaction evidence="1">
        <text>ATP + H2O = ADP + phosphate + H(+)</text>
        <dbReference type="Rhea" id="RHEA:13065"/>
        <dbReference type="ChEBI" id="CHEBI:15377"/>
        <dbReference type="ChEBI" id="CHEBI:15378"/>
        <dbReference type="ChEBI" id="CHEBI:30616"/>
        <dbReference type="ChEBI" id="CHEBI:43474"/>
        <dbReference type="ChEBI" id="CHEBI:456216"/>
        <dbReference type="EC" id="3.6.4.13"/>
    </reaction>
</comment>
<comment type="subcellular location">
    <subcellularLocation>
        <location evidence="1">Cytoplasm</location>
    </subcellularLocation>
</comment>
<comment type="induction">
    <text evidence="3 4">By growth at 3 degrees Celsius (PubMed:22564273), and 3.5% ethanol (PubMed:22820328).</text>
</comment>
<comment type="disruption phenotype">
    <text evidence="3 4">Growth rate decreased at 37 and 25 degrees Celsius, almost completely stopped at 3 degrees Celsius. No motility at 25 or 3 degrees Celsius (PubMed:22564273). Decreased growth at 42 degrees Celsius, pH 9.4 and in the presence of 5 mM H(2)O(2) (PubMed:22820328).</text>
</comment>
<comment type="similarity">
    <text evidence="1">Belongs to the DEAD box helicase family. CshB subfamily.</text>
</comment>
<protein>
    <recommendedName>
        <fullName evidence="1">DEAD-box ATP-dependent RNA helicase CshB</fullName>
        <ecNumber evidence="1">3.6.4.13</ecNumber>
    </recommendedName>
</protein>
<dbReference type="EC" id="3.6.4.13" evidence="1"/>
<dbReference type="EMBL" id="AL591979">
    <property type="protein sequence ID" value="CAC99528.1"/>
    <property type="molecule type" value="Genomic_DNA"/>
</dbReference>
<dbReference type="PIR" id="AB1256">
    <property type="entry name" value="AB1256"/>
</dbReference>
<dbReference type="RefSeq" id="NP_464975.1">
    <property type="nucleotide sequence ID" value="NC_003210.1"/>
</dbReference>
<dbReference type="RefSeq" id="WP_003721956.1">
    <property type="nucleotide sequence ID" value="NZ_CP149495.1"/>
</dbReference>
<dbReference type="SMR" id="Q8Y755"/>
<dbReference type="STRING" id="169963.gene:17594107"/>
<dbReference type="PaxDb" id="169963-lmo1450"/>
<dbReference type="EnsemblBacteria" id="CAC99528">
    <property type="protein sequence ID" value="CAC99528"/>
    <property type="gene ID" value="CAC99528"/>
</dbReference>
<dbReference type="GeneID" id="86846432"/>
<dbReference type="GeneID" id="987133"/>
<dbReference type="KEGG" id="lmo:lmo1450"/>
<dbReference type="PATRIC" id="fig|169963.11.peg.1489"/>
<dbReference type="eggNOG" id="COG0513">
    <property type="taxonomic scope" value="Bacteria"/>
</dbReference>
<dbReference type="HOGENOM" id="CLU_003041_1_3_9"/>
<dbReference type="OrthoDB" id="9805696at2"/>
<dbReference type="PhylomeDB" id="Q8Y755"/>
<dbReference type="BioCyc" id="LMON169963:LMO1450-MONOMER"/>
<dbReference type="PHI-base" id="PHI:7619"/>
<dbReference type="Proteomes" id="UP000000817">
    <property type="component" value="Chromosome"/>
</dbReference>
<dbReference type="GO" id="GO:0005829">
    <property type="term" value="C:cytosol"/>
    <property type="evidence" value="ECO:0000318"/>
    <property type="project" value="GO_Central"/>
</dbReference>
<dbReference type="GO" id="GO:0005524">
    <property type="term" value="F:ATP binding"/>
    <property type="evidence" value="ECO:0007669"/>
    <property type="project" value="UniProtKB-UniRule"/>
</dbReference>
<dbReference type="GO" id="GO:0016887">
    <property type="term" value="F:ATP hydrolysis activity"/>
    <property type="evidence" value="ECO:0007669"/>
    <property type="project" value="RHEA"/>
</dbReference>
<dbReference type="GO" id="GO:0003724">
    <property type="term" value="F:RNA helicase activity"/>
    <property type="evidence" value="ECO:0000318"/>
    <property type="project" value="GO_Central"/>
</dbReference>
<dbReference type="GO" id="GO:0033592">
    <property type="term" value="F:RNA strand annealing activity"/>
    <property type="evidence" value="ECO:0000318"/>
    <property type="project" value="GO_Central"/>
</dbReference>
<dbReference type="GO" id="GO:0009409">
    <property type="term" value="P:response to cold"/>
    <property type="evidence" value="ECO:0000318"/>
    <property type="project" value="GO_Central"/>
</dbReference>
<dbReference type="GO" id="GO:0006401">
    <property type="term" value="P:RNA catabolic process"/>
    <property type="evidence" value="ECO:0007669"/>
    <property type="project" value="UniProtKB-UniRule"/>
</dbReference>
<dbReference type="CDD" id="cd00268">
    <property type="entry name" value="DEADc"/>
    <property type="match status" value="1"/>
</dbReference>
<dbReference type="CDD" id="cd18787">
    <property type="entry name" value="SF2_C_DEAD"/>
    <property type="match status" value="1"/>
</dbReference>
<dbReference type="Gene3D" id="3.40.50.300">
    <property type="entry name" value="P-loop containing nucleotide triphosphate hydrolases"/>
    <property type="match status" value="2"/>
</dbReference>
<dbReference type="HAMAP" id="MF_01494">
    <property type="entry name" value="DEAD_helicase_CshB"/>
    <property type="match status" value="1"/>
</dbReference>
<dbReference type="InterPro" id="IPR030881">
    <property type="entry name" value="CshB"/>
</dbReference>
<dbReference type="InterPro" id="IPR011545">
    <property type="entry name" value="DEAD/DEAH_box_helicase_dom"/>
</dbReference>
<dbReference type="InterPro" id="IPR050547">
    <property type="entry name" value="DEAD_box_RNA_helicases"/>
</dbReference>
<dbReference type="InterPro" id="IPR014001">
    <property type="entry name" value="Helicase_ATP-bd"/>
</dbReference>
<dbReference type="InterPro" id="IPR001650">
    <property type="entry name" value="Helicase_C-like"/>
</dbReference>
<dbReference type="InterPro" id="IPR027417">
    <property type="entry name" value="P-loop_NTPase"/>
</dbReference>
<dbReference type="InterPro" id="IPR014014">
    <property type="entry name" value="RNA_helicase_DEAD_Q_motif"/>
</dbReference>
<dbReference type="PANTHER" id="PTHR47963">
    <property type="entry name" value="DEAD-BOX ATP-DEPENDENT RNA HELICASE 47, MITOCHONDRIAL"/>
    <property type="match status" value="1"/>
</dbReference>
<dbReference type="PANTHER" id="PTHR47963:SF1">
    <property type="entry name" value="DEAD-BOX ATP-DEPENDENT RNA HELICASE CSHB"/>
    <property type="match status" value="1"/>
</dbReference>
<dbReference type="Pfam" id="PF00270">
    <property type="entry name" value="DEAD"/>
    <property type="match status" value="1"/>
</dbReference>
<dbReference type="Pfam" id="PF00271">
    <property type="entry name" value="Helicase_C"/>
    <property type="match status" value="1"/>
</dbReference>
<dbReference type="SMART" id="SM00487">
    <property type="entry name" value="DEXDc"/>
    <property type="match status" value="1"/>
</dbReference>
<dbReference type="SMART" id="SM00490">
    <property type="entry name" value="HELICc"/>
    <property type="match status" value="1"/>
</dbReference>
<dbReference type="SUPFAM" id="SSF52540">
    <property type="entry name" value="P-loop containing nucleoside triphosphate hydrolases"/>
    <property type="match status" value="1"/>
</dbReference>
<dbReference type="PROSITE" id="PS51192">
    <property type="entry name" value="HELICASE_ATP_BIND_1"/>
    <property type="match status" value="1"/>
</dbReference>
<dbReference type="PROSITE" id="PS51194">
    <property type="entry name" value="HELICASE_CTER"/>
    <property type="match status" value="1"/>
</dbReference>
<dbReference type="PROSITE" id="PS51195">
    <property type="entry name" value="Q_MOTIF"/>
    <property type="match status" value="1"/>
</dbReference>
<evidence type="ECO:0000255" key="1">
    <source>
        <dbReference type="HAMAP-Rule" id="MF_01494"/>
    </source>
</evidence>
<evidence type="ECO:0000256" key="2">
    <source>
        <dbReference type="SAM" id="MobiDB-lite"/>
    </source>
</evidence>
<evidence type="ECO:0000269" key="3">
    <source>
    </source>
</evidence>
<evidence type="ECO:0000269" key="4">
    <source>
    </source>
</evidence>
<proteinExistence type="evidence at transcript level"/>
<reference key="1">
    <citation type="journal article" date="2001" name="Science">
        <title>Comparative genomics of Listeria species.</title>
        <authorList>
            <person name="Glaser P."/>
            <person name="Frangeul L."/>
            <person name="Buchrieser C."/>
            <person name="Rusniok C."/>
            <person name="Amend A."/>
            <person name="Baquero F."/>
            <person name="Berche P."/>
            <person name="Bloecker H."/>
            <person name="Brandt P."/>
            <person name="Chakraborty T."/>
            <person name="Charbit A."/>
            <person name="Chetouani F."/>
            <person name="Couve E."/>
            <person name="de Daruvar A."/>
            <person name="Dehoux P."/>
            <person name="Domann E."/>
            <person name="Dominguez-Bernal G."/>
            <person name="Duchaud E."/>
            <person name="Durant L."/>
            <person name="Dussurget O."/>
            <person name="Entian K.-D."/>
            <person name="Fsihi H."/>
            <person name="Garcia-del Portillo F."/>
            <person name="Garrido P."/>
            <person name="Gautier L."/>
            <person name="Goebel W."/>
            <person name="Gomez-Lopez N."/>
            <person name="Hain T."/>
            <person name="Hauf J."/>
            <person name="Jackson D."/>
            <person name="Jones L.-M."/>
            <person name="Kaerst U."/>
            <person name="Kreft J."/>
            <person name="Kuhn M."/>
            <person name="Kunst F."/>
            <person name="Kurapkat G."/>
            <person name="Madueno E."/>
            <person name="Maitournam A."/>
            <person name="Mata Vicente J."/>
            <person name="Ng E."/>
            <person name="Nedjari H."/>
            <person name="Nordsiek G."/>
            <person name="Novella S."/>
            <person name="de Pablos B."/>
            <person name="Perez-Diaz J.-C."/>
            <person name="Purcell R."/>
            <person name="Remmel B."/>
            <person name="Rose M."/>
            <person name="Schlueter T."/>
            <person name="Simoes N."/>
            <person name="Tierrez A."/>
            <person name="Vazquez-Boland J.-A."/>
            <person name="Voss H."/>
            <person name="Wehland J."/>
            <person name="Cossart P."/>
        </authorList>
    </citation>
    <scope>NUCLEOTIDE SEQUENCE [LARGE SCALE GENOMIC DNA]</scope>
    <source>
        <strain>ATCC BAA-679 / EGD-e</strain>
    </source>
</reference>
<reference key="2">
    <citation type="journal article" date="2012" name="Appl. Environ. Microbiol.">
        <title>Roles of four putative DEAD-box RNA helicase genes in growth of Listeria monocytogenes EGD-e under heat, pH, osmotic, ethanol, and oxidative stress conditions.</title>
        <authorList>
            <person name="Markkula A."/>
            <person name="Lindstrom M."/>
            <person name="Johansson P."/>
            <person name="Bjorkroth J."/>
            <person name="Korkeala H."/>
        </authorList>
    </citation>
    <scope>FUNCTION</scope>
    <scope>INDUCTION</scope>
    <scope>DISRUPTION PHENOTYPE</scope>
    <source>
        <strain>ATCC BAA-679 / EGD-e</strain>
    </source>
</reference>
<reference key="3">
    <citation type="journal article" date="2012" name="Environ. Microbiol.">
        <title>Genes encoding putative DEAD-box RNA helicases in Listeria monocytogenes EGD-e are needed for growth and motility at 3 degrees C.</title>
        <authorList>
            <person name="Markkula A."/>
            <person name="Mattila M."/>
            <person name="Lindstrom M."/>
            <person name="Korkeala H."/>
        </authorList>
    </citation>
    <scope>FUNCTION</scope>
    <scope>INDUCTION</scope>
    <scope>DISRUPTION PHENOTYPE</scope>
    <source>
        <strain>ATCC BAA-679 / EGD-e</strain>
    </source>
</reference>
<sequence>MTKKSRFDQFGFQPFIGLAIDKLGFYEPTEVQQKLIPGILKGESIIGQSQTGTGKTHTFILPIINNVNPEKDAVQAVITAPSRELATQIYNEIRKVTKYSEKEIAVQLVIGGTDKQRAIDKLKKQPQIIVGTPGRINDLIREQALFVHTAKTLVIDEADMTLDMGFLNDVDHIAGKMPANLQMLVFSATIPQKLKPFLSKYMENPRYEHIQPKVAASKTVEHRIMATRSRNKLDLLKNVLVGSQPYLAIVFTNTKTTADEVANGLIERGLKVAKIHGDVNPRERKRTMKQIENLDYQYVVATDLAARGIDIQGISHVVNYELPDDLDFYIHRTGRTGRAGHSGIALTLFEPADEDRLNQLEKMGIEFKHVDWKNKEFVTLEDRNRRAKREAKRETADPREIGMRKKAKQKGKPNYKKKINYKMNEIKRRERRKKR</sequence>
<feature type="chain" id="PRO_0000430110" description="DEAD-box ATP-dependent RNA helicase CshB">
    <location>
        <begin position="1"/>
        <end position="435"/>
    </location>
</feature>
<feature type="domain" description="Helicase ATP-binding" evidence="1">
    <location>
        <begin position="36"/>
        <end position="208"/>
    </location>
</feature>
<feature type="domain" description="Helicase C-terminal" evidence="1">
    <location>
        <begin position="235"/>
        <end position="378"/>
    </location>
</feature>
<feature type="region of interest" description="Disordered" evidence="2">
    <location>
        <begin position="383"/>
        <end position="435"/>
    </location>
</feature>
<feature type="short sequence motif" description="Q motif">
    <location>
        <begin position="5"/>
        <end position="33"/>
    </location>
</feature>
<feature type="short sequence motif" description="DEAD box">
    <location>
        <begin position="156"/>
        <end position="159"/>
    </location>
</feature>
<feature type="compositionally biased region" description="Basic and acidic residues" evidence="2">
    <location>
        <begin position="391"/>
        <end position="403"/>
    </location>
</feature>
<feature type="compositionally biased region" description="Basic residues" evidence="2">
    <location>
        <begin position="404"/>
        <end position="420"/>
    </location>
</feature>
<feature type="binding site" evidence="1">
    <location>
        <begin position="49"/>
        <end position="56"/>
    </location>
    <ligand>
        <name>ATP</name>
        <dbReference type="ChEBI" id="CHEBI:30616"/>
    </ligand>
</feature>
<accession>Q8Y755</accession>
<keyword id="KW-0067">ATP-binding</keyword>
<keyword id="KW-0963">Cytoplasm</keyword>
<keyword id="KW-0347">Helicase</keyword>
<keyword id="KW-0378">Hydrolase</keyword>
<keyword id="KW-0547">Nucleotide-binding</keyword>
<keyword id="KW-1185">Reference proteome</keyword>
<keyword id="KW-0694">RNA-binding</keyword>
<keyword id="KW-0346">Stress response</keyword>
<organism>
    <name type="scientific">Listeria monocytogenes serovar 1/2a (strain ATCC BAA-679 / EGD-e)</name>
    <dbReference type="NCBI Taxonomy" id="169963"/>
    <lineage>
        <taxon>Bacteria</taxon>
        <taxon>Bacillati</taxon>
        <taxon>Bacillota</taxon>
        <taxon>Bacilli</taxon>
        <taxon>Bacillales</taxon>
        <taxon>Listeriaceae</taxon>
        <taxon>Listeria</taxon>
    </lineage>
</organism>